<reference key="1">
    <citation type="journal article" date="1984" name="Nucleic Acids Res.">
        <title>DNA sequence of the Rhizobium leguminosarum nodulation genes nodAB and C required for root hair curling.</title>
        <authorList>
            <person name="Rossen L."/>
            <person name="Johnston A.W.B."/>
            <person name="Downie J.A."/>
        </authorList>
    </citation>
    <scope>NUCLEOTIDE SEQUENCE [GENOMIC DNA]</scope>
    <source>
        <strain>248</strain>
    </source>
</reference>
<feature type="chain" id="PRO_0000196341" description="Nodulation protein A">
    <location>
        <begin position="1"/>
        <end position="196"/>
    </location>
</feature>
<geneLocation type="plasmid">
    <name>sym pRL1JI</name>
</geneLocation>
<gene>
    <name type="primary">nodA</name>
</gene>
<proteinExistence type="inferred from homology"/>
<comment type="function">
    <text evidence="1">N-acyltransferase required for nodulation. Acts in the production of a small, heat-stable compound (Nod) that stimulates mitosis in various plant protoplasts (By similarity).</text>
</comment>
<comment type="subcellular location">
    <subcellularLocation>
        <location evidence="1">Cytoplasm</location>
    </subcellularLocation>
</comment>
<comment type="similarity">
    <text evidence="2">Belongs to the NodA family.</text>
</comment>
<accession>P04338</accession>
<protein>
    <recommendedName>
        <fullName>Nodulation protein A</fullName>
        <ecNumber>2.3.1.-</ecNumber>
    </recommendedName>
</protein>
<sequence length="196" mass="21825">MSSEVRWKICWENELEASDHAELADFFCKTYGPTGAFNAKPFETGRSWGGARPERRAIAYDSHGVASHMGLLRRFIKVGTTDLLVAELGLYGVRPDLEGLGIAHSVRAMFPILRELSVPFAFGTVRHAMRNHMERYCRDGTANIMTGLRVRSTLPDAHSDLPATRTEDVLVLVVPVDRPMTEWPAGSLIERNGSEL</sequence>
<dbReference type="EC" id="2.3.1.-"/>
<dbReference type="EMBL" id="Y00548">
    <property type="protein sequence ID" value="CAA68621.1"/>
    <property type="molecule type" value="Genomic_DNA"/>
</dbReference>
<dbReference type="EMBL" id="X01650">
    <property type="protein sequence ID" value="CAA25812.1"/>
    <property type="status" value="ALT_SEQ"/>
    <property type="molecule type" value="Genomic_DNA"/>
</dbReference>
<dbReference type="PIR" id="A03482">
    <property type="entry name" value="ZZZRAL"/>
</dbReference>
<dbReference type="RefSeq" id="WP_003551805.1">
    <property type="nucleotide sequence ID" value="NZ_WIFA01000003.1"/>
</dbReference>
<dbReference type="SMR" id="P04338"/>
<dbReference type="OMA" id="FPIGRPM"/>
<dbReference type="GO" id="GO:0005829">
    <property type="term" value="C:cytosol"/>
    <property type="evidence" value="ECO:0007669"/>
    <property type="project" value="InterPro"/>
</dbReference>
<dbReference type="GO" id="GO:0016746">
    <property type="term" value="F:acyltransferase activity"/>
    <property type="evidence" value="ECO:0007669"/>
    <property type="project" value="UniProtKB-UniRule"/>
</dbReference>
<dbReference type="Gene3D" id="3.40.630.30">
    <property type="match status" value="1"/>
</dbReference>
<dbReference type="HAMAP" id="MF_00084">
    <property type="entry name" value="NodA"/>
    <property type="match status" value="1"/>
</dbReference>
<dbReference type="InterPro" id="IPR003484">
    <property type="entry name" value="NodA"/>
</dbReference>
<dbReference type="InterPro" id="IPR020567">
    <property type="entry name" value="Nodulation_prot_NodA_CS"/>
</dbReference>
<dbReference type="NCBIfam" id="TIGR04245">
    <property type="entry name" value="nodulat_NodA"/>
    <property type="match status" value="1"/>
</dbReference>
<dbReference type="NCBIfam" id="NF001974">
    <property type="entry name" value="PRK00756.1"/>
    <property type="match status" value="1"/>
</dbReference>
<dbReference type="Pfam" id="PF02474">
    <property type="entry name" value="NodA"/>
    <property type="match status" value="1"/>
</dbReference>
<dbReference type="PROSITE" id="PS01349">
    <property type="entry name" value="NODA"/>
    <property type="match status" value="1"/>
</dbReference>
<keyword id="KW-0012">Acyltransferase</keyword>
<keyword id="KW-0963">Cytoplasm</keyword>
<keyword id="KW-0536">Nodulation</keyword>
<keyword id="KW-0614">Plasmid</keyword>
<keyword id="KW-0808">Transferase</keyword>
<organism>
    <name type="scientific">Rhizobium leguminosarum bv. viciae</name>
    <dbReference type="NCBI Taxonomy" id="387"/>
    <lineage>
        <taxon>Bacteria</taxon>
        <taxon>Pseudomonadati</taxon>
        <taxon>Pseudomonadota</taxon>
        <taxon>Alphaproteobacteria</taxon>
        <taxon>Hyphomicrobiales</taxon>
        <taxon>Rhizobiaceae</taxon>
        <taxon>Rhizobium/Agrobacterium group</taxon>
        <taxon>Rhizobium</taxon>
    </lineage>
</organism>
<evidence type="ECO:0000250" key="1"/>
<evidence type="ECO:0000305" key="2"/>
<name>NODA_RHILV</name>